<evidence type="ECO:0000255" key="1">
    <source>
        <dbReference type="HAMAP-Rule" id="MF_00206"/>
    </source>
</evidence>
<evidence type="ECO:0000255" key="2">
    <source>
        <dbReference type="PROSITE-ProRule" id="PRU01266"/>
    </source>
</evidence>
<dbReference type="EC" id="2.8.1.8" evidence="1"/>
<dbReference type="EMBL" id="LT708304">
    <property type="protein sequence ID" value="SIU00849.1"/>
    <property type="molecule type" value="Genomic_DNA"/>
</dbReference>
<dbReference type="RefSeq" id="NP_855890.1">
    <property type="nucleotide sequence ID" value="NC_002945.3"/>
</dbReference>
<dbReference type="RefSeq" id="WP_003411460.1">
    <property type="nucleotide sequence ID" value="NC_002945.4"/>
</dbReference>
<dbReference type="SMR" id="P65284"/>
<dbReference type="GeneID" id="45426194"/>
<dbReference type="KEGG" id="mbo:BQ2027_MB2241"/>
<dbReference type="PATRIC" id="fig|233413.5.peg.2457"/>
<dbReference type="UniPathway" id="UPA00538">
    <property type="reaction ID" value="UER00593"/>
</dbReference>
<dbReference type="Proteomes" id="UP000001419">
    <property type="component" value="Chromosome"/>
</dbReference>
<dbReference type="GO" id="GO:0005737">
    <property type="term" value="C:cytoplasm"/>
    <property type="evidence" value="ECO:0007669"/>
    <property type="project" value="UniProtKB-SubCell"/>
</dbReference>
<dbReference type="GO" id="GO:0051539">
    <property type="term" value="F:4 iron, 4 sulfur cluster binding"/>
    <property type="evidence" value="ECO:0007669"/>
    <property type="project" value="UniProtKB-UniRule"/>
</dbReference>
<dbReference type="GO" id="GO:0016992">
    <property type="term" value="F:lipoate synthase activity"/>
    <property type="evidence" value="ECO:0007669"/>
    <property type="project" value="UniProtKB-UniRule"/>
</dbReference>
<dbReference type="GO" id="GO:0046872">
    <property type="term" value="F:metal ion binding"/>
    <property type="evidence" value="ECO:0007669"/>
    <property type="project" value="UniProtKB-KW"/>
</dbReference>
<dbReference type="CDD" id="cd01335">
    <property type="entry name" value="Radical_SAM"/>
    <property type="match status" value="1"/>
</dbReference>
<dbReference type="FunFam" id="3.20.20.70:FF:000116">
    <property type="entry name" value="Lipoyl synthase"/>
    <property type="match status" value="1"/>
</dbReference>
<dbReference type="Gene3D" id="3.20.20.70">
    <property type="entry name" value="Aldolase class I"/>
    <property type="match status" value="1"/>
</dbReference>
<dbReference type="HAMAP" id="MF_00206">
    <property type="entry name" value="Lipoyl_synth"/>
    <property type="match status" value="1"/>
</dbReference>
<dbReference type="InterPro" id="IPR013785">
    <property type="entry name" value="Aldolase_TIM"/>
</dbReference>
<dbReference type="InterPro" id="IPR006638">
    <property type="entry name" value="Elp3/MiaA/NifB-like_rSAM"/>
</dbReference>
<dbReference type="InterPro" id="IPR031691">
    <property type="entry name" value="LIAS_N"/>
</dbReference>
<dbReference type="InterPro" id="IPR003698">
    <property type="entry name" value="Lipoyl_synth"/>
</dbReference>
<dbReference type="InterPro" id="IPR007197">
    <property type="entry name" value="rSAM"/>
</dbReference>
<dbReference type="NCBIfam" id="TIGR00510">
    <property type="entry name" value="lipA"/>
    <property type="match status" value="1"/>
</dbReference>
<dbReference type="NCBIfam" id="NF004019">
    <property type="entry name" value="PRK05481.1"/>
    <property type="match status" value="1"/>
</dbReference>
<dbReference type="NCBIfam" id="NF009544">
    <property type="entry name" value="PRK12928.1"/>
    <property type="match status" value="1"/>
</dbReference>
<dbReference type="PANTHER" id="PTHR10949">
    <property type="entry name" value="LIPOYL SYNTHASE"/>
    <property type="match status" value="1"/>
</dbReference>
<dbReference type="PANTHER" id="PTHR10949:SF0">
    <property type="entry name" value="LIPOYL SYNTHASE, MITOCHONDRIAL"/>
    <property type="match status" value="1"/>
</dbReference>
<dbReference type="Pfam" id="PF16881">
    <property type="entry name" value="LIAS_N"/>
    <property type="match status" value="1"/>
</dbReference>
<dbReference type="Pfam" id="PF04055">
    <property type="entry name" value="Radical_SAM"/>
    <property type="match status" value="1"/>
</dbReference>
<dbReference type="PIRSF" id="PIRSF005963">
    <property type="entry name" value="Lipoyl_synth"/>
    <property type="match status" value="1"/>
</dbReference>
<dbReference type="SFLD" id="SFLDF00271">
    <property type="entry name" value="lipoyl_synthase"/>
    <property type="match status" value="1"/>
</dbReference>
<dbReference type="SFLD" id="SFLDS00029">
    <property type="entry name" value="Radical_SAM"/>
    <property type="match status" value="1"/>
</dbReference>
<dbReference type="SMART" id="SM00729">
    <property type="entry name" value="Elp3"/>
    <property type="match status" value="1"/>
</dbReference>
<dbReference type="SUPFAM" id="SSF102114">
    <property type="entry name" value="Radical SAM enzymes"/>
    <property type="match status" value="1"/>
</dbReference>
<dbReference type="PROSITE" id="PS51918">
    <property type="entry name" value="RADICAL_SAM"/>
    <property type="match status" value="1"/>
</dbReference>
<protein>
    <recommendedName>
        <fullName evidence="1">Lipoyl synthase</fullName>
        <ecNumber evidence="1">2.8.1.8</ecNumber>
    </recommendedName>
    <alternativeName>
        <fullName evidence="1">Lip-syn</fullName>
        <shortName evidence="1">LS</shortName>
    </alternativeName>
    <alternativeName>
        <fullName evidence="1">Lipoate synthase</fullName>
    </alternativeName>
    <alternativeName>
        <fullName evidence="1">Lipoic acid synthase</fullName>
    </alternativeName>
    <alternativeName>
        <fullName evidence="1">Sulfur insertion protein LipA</fullName>
    </alternativeName>
</protein>
<gene>
    <name evidence="1" type="primary">lipA</name>
    <name type="ordered locus">BQ2027_MB2241</name>
</gene>
<name>LIPA_MYCBO</name>
<proteinExistence type="inferred from homology"/>
<sequence length="311" mass="34719">MSVAAEGRRLLRLEVRNAQTPIERKPPWIKTRARIGPEYTELKNLVRREGLHTVCEEAGCPNIFECWEDREATFLIGGDQCTRRCDFCQIDTGKPAELDRDEPRRVADSVRTMGLRYATVTGVARDDLPDGGAWLYAATVRAIKELNPSTGVELLIPDFNGEPTRLAEVFESGPEVLAHNVETVPRIFKRIRPAFTYRRSLGVLTAARDAGLVTKSNLILGLGETSDEVRTALGDLRDAGCDIVTITQYLRPSARHHPVERWVKPEEFVQFARFAEGLGFAGVLAGPLVRSSYRAGRLYEQARNSRALASR</sequence>
<reference key="1">
    <citation type="journal article" date="2003" name="Proc. Natl. Acad. Sci. U.S.A.">
        <title>The complete genome sequence of Mycobacterium bovis.</title>
        <authorList>
            <person name="Garnier T."/>
            <person name="Eiglmeier K."/>
            <person name="Camus J.-C."/>
            <person name="Medina N."/>
            <person name="Mansoor H."/>
            <person name="Pryor M."/>
            <person name="Duthoy S."/>
            <person name="Grondin S."/>
            <person name="Lacroix C."/>
            <person name="Monsempe C."/>
            <person name="Simon S."/>
            <person name="Harris B."/>
            <person name="Atkin R."/>
            <person name="Doggett J."/>
            <person name="Mayes R."/>
            <person name="Keating L."/>
            <person name="Wheeler P.R."/>
            <person name="Parkhill J."/>
            <person name="Barrell B.G."/>
            <person name="Cole S.T."/>
            <person name="Gordon S.V."/>
            <person name="Hewinson R.G."/>
        </authorList>
    </citation>
    <scope>NUCLEOTIDE SEQUENCE [LARGE SCALE GENOMIC DNA]</scope>
    <source>
        <strain>ATCC BAA-935 / AF2122/97</strain>
    </source>
</reference>
<reference key="2">
    <citation type="journal article" date="2017" name="Genome Announc.">
        <title>Updated reference genome sequence and annotation of Mycobacterium bovis AF2122/97.</title>
        <authorList>
            <person name="Malone K.M."/>
            <person name="Farrell D."/>
            <person name="Stuber T.P."/>
            <person name="Schubert O.T."/>
            <person name="Aebersold R."/>
            <person name="Robbe-Austerman S."/>
            <person name="Gordon S.V."/>
        </authorList>
    </citation>
    <scope>NUCLEOTIDE SEQUENCE [LARGE SCALE GENOMIC DNA]</scope>
    <scope>GENOME REANNOTATION</scope>
    <source>
        <strain>ATCC BAA-935 / AF2122/97</strain>
    </source>
</reference>
<accession>P65284</accession>
<accession>A0A1R3Y0K8</accession>
<accession>Q10380</accession>
<accession>X2BK56</accession>
<feature type="chain" id="PRO_0000102327" description="Lipoyl synthase">
    <location>
        <begin position="1"/>
        <end position="311"/>
    </location>
</feature>
<feature type="domain" description="Radical SAM core" evidence="2">
    <location>
        <begin position="67"/>
        <end position="281"/>
    </location>
</feature>
<feature type="binding site" evidence="1">
    <location>
        <position position="55"/>
    </location>
    <ligand>
        <name>[4Fe-4S] cluster</name>
        <dbReference type="ChEBI" id="CHEBI:49883"/>
        <label>1</label>
    </ligand>
</feature>
<feature type="binding site" evidence="1">
    <location>
        <position position="60"/>
    </location>
    <ligand>
        <name>[4Fe-4S] cluster</name>
        <dbReference type="ChEBI" id="CHEBI:49883"/>
        <label>1</label>
    </ligand>
</feature>
<feature type="binding site" evidence="1">
    <location>
        <position position="66"/>
    </location>
    <ligand>
        <name>[4Fe-4S] cluster</name>
        <dbReference type="ChEBI" id="CHEBI:49883"/>
        <label>1</label>
    </ligand>
</feature>
<feature type="binding site" evidence="1">
    <location>
        <position position="81"/>
    </location>
    <ligand>
        <name>[4Fe-4S] cluster</name>
        <dbReference type="ChEBI" id="CHEBI:49883"/>
        <label>2</label>
        <note>4Fe-4S-S-AdoMet</note>
    </ligand>
</feature>
<feature type="binding site" evidence="1">
    <location>
        <position position="85"/>
    </location>
    <ligand>
        <name>[4Fe-4S] cluster</name>
        <dbReference type="ChEBI" id="CHEBI:49883"/>
        <label>2</label>
        <note>4Fe-4S-S-AdoMet</note>
    </ligand>
</feature>
<feature type="binding site" evidence="1">
    <location>
        <position position="88"/>
    </location>
    <ligand>
        <name>[4Fe-4S] cluster</name>
        <dbReference type="ChEBI" id="CHEBI:49883"/>
        <label>2</label>
        <note>4Fe-4S-S-AdoMet</note>
    </ligand>
</feature>
<feature type="binding site" evidence="1">
    <location>
        <position position="292"/>
    </location>
    <ligand>
        <name>[4Fe-4S] cluster</name>
        <dbReference type="ChEBI" id="CHEBI:49883"/>
        <label>1</label>
    </ligand>
</feature>
<comment type="function">
    <text evidence="1">Catalyzes the radical-mediated insertion of two sulfur atoms into the C-6 and C-8 positions of the octanoyl moiety bound to the lipoyl domains of lipoate-dependent enzymes, thereby converting the octanoylated domains into lipoylated derivatives.</text>
</comment>
<comment type="catalytic activity">
    <reaction evidence="1">
        <text>[[Fe-S] cluster scaffold protein carrying a second [4Fe-4S](2+) cluster] + N(6)-octanoyl-L-lysyl-[protein] + 2 oxidized [2Fe-2S]-[ferredoxin] + 2 S-adenosyl-L-methionine + 4 H(+) = [[Fe-S] cluster scaffold protein] + N(6)-[(R)-dihydrolipoyl]-L-lysyl-[protein] + 4 Fe(3+) + 2 hydrogen sulfide + 2 5'-deoxyadenosine + 2 L-methionine + 2 reduced [2Fe-2S]-[ferredoxin]</text>
        <dbReference type="Rhea" id="RHEA:16585"/>
        <dbReference type="Rhea" id="RHEA-COMP:9928"/>
        <dbReference type="Rhea" id="RHEA-COMP:10000"/>
        <dbReference type="Rhea" id="RHEA-COMP:10001"/>
        <dbReference type="Rhea" id="RHEA-COMP:10475"/>
        <dbReference type="Rhea" id="RHEA-COMP:14568"/>
        <dbReference type="Rhea" id="RHEA-COMP:14569"/>
        <dbReference type="ChEBI" id="CHEBI:15378"/>
        <dbReference type="ChEBI" id="CHEBI:17319"/>
        <dbReference type="ChEBI" id="CHEBI:29034"/>
        <dbReference type="ChEBI" id="CHEBI:29919"/>
        <dbReference type="ChEBI" id="CHEBI:33722"/>
        <dbReference type="ChEBI" id="CHEBI:33737"/>
        <dbReference type="ChEBI" id="CHEBI:33738"/>
        <dbReference type="ChEBI" id="CHEBI:57844"/>
        <dbReference type="ChEBI" id="CHEBI:59789"/>
        <dbReference type="ChEBI" id="CHEBI:78809"/>
        <dbReference type="ChEBI" id="CHEBI:83100"/>
        <dbReference type="EC" id="2.8.1.8"/>
    </reaction>
</comment>
<comment type="cofactor">
    <cofactor evidence="1">
        <name>[4Fe-4S] cluster</name>
        <dbReference type="ChEBI" id="CHEBI:49883"/>
    </cofactor>
    <text evidence="1">Binds 2 [4Fe-4S] clusters per subunit. One cluster is coordinated with 3 cysteines and an exchangeable S-adenosyl-L-methionine.</text>
</comment>
<comment type="pathway">
    <text evidence="1">Protein modification; protein lipoylation via endogenous pathway; protein N(6)-(lipoyl)lysine from octanoyl-[acyl-carrier-protein]: step 2/2.</text>
</comment>
<comment type="subcellular location">
    <subcellularLocation>
        <location evidence="1">Cytoplasm</location>
    </subcellularLocation>
</comment>
<comment type="similarity">
    <text evidence="1">Belongs to the radical SAM superfamily. Lipoyl synthase family.</text>
</comment>
<organism>
    <name type="scientific">Mycobacterium bovis (strain ATCC BAA-935 / AF2122/97)</name>
    <dbReference type="NCBI Taxonomy" id="233413"/>
    <lineage>
        <taxon>Bacteria</taxon>
        <taxon>Bacillati</taxon>
        <taxon>Actinomycetota</taxon>
        <taxon>Actinomycetes</taxon>
        <taxon>Mycobacteriales</taxon>
        <taxon>Mycobacteriaceae</taxon>
        <taxon>Mycobacterium</taxon>
        <taxon>Mycobacterium tuberculosis complex</taxon>
    </lineage>
</organism>
<keyword id="KW-0004">4Fe-4S</keyword>
<keyword id="KW-0963">Cytoplasm</keyword>
<keyword id="KW-0408">Iron</keyword>
<keyword id="KW-0411">Iron-sulfur</keyword>
<keyword id="KW-0479">Metal-binding</keyword>
<keyword id="KW-1185">Reference proteome</keyword>
<keyword id="KW-0949">S-adenosyl-L-methionine</keyword>
<keyword id="KW-0808">Transferase</keyword>